<geneLocation type="mitochondrion"/>
<name>CYB_HETSI</name>
<organism>
    <name type="scientific">Heterodon simus</name>
    <name type="common">Southern hognose snake</name>
    <name type="synonym">Coluber simus</name>
    <dbReference type="NCBI Taxonomy" id="111884"/>
    <lineage>
        <taxon>Eukaryota</taxon>
        <taxon>Metazoa</taxon>
        <taxon>Chordata</taxon>
        <taxon>Craniata</taxon>
        <taxon>Vertebrata</taxon>
        <taxon>Euteleostomi</taxon>
        <taxon>Lepidosauria</taxon>
        <taxon>Squamata</taxon>
        <taxon>Bifurcata</taxon>
        <taxon>Unidentata</taxon>
        <taxon>Episquamata</taxon>
        <taxon>Toxicofera</taxon>
        <taxon>Serpentes</taxon>
        <taxon>Colubroidea</taxon>
        <taxon>Dipsadidae</taxon>
        <taxon>Heterodon</taxon>
    </lineage>
</organism>
<accession>Q9MLI8</accession>
<proteinExistence type="inferred from homology"/>
<gene>
    <name type="primary">MT-CYB</name>
    <name type="synonym">COB</name>
    <name type="synonym">CYTB</name>
    <name type="synonym">MTCYB</name>
</gene>
<sequence length="372" mass="42165">MSNQHTLLMFNLLPVGLNISTWWNFGSMLLTCTALQTTTGFFLAIHYTANINLAFTSIVHITRDVPYGWIMQNIHATGASMFFICIYIHIARGLYYGSYLNKEVWVSGTTLLVTLMATAFFGYVLPWGQMSFWAATVITNLLTAVPYLGSTLTTWLWGGFSINDPTLTRFFALHFILPFIIISTSLIHVMLLHNEGSSNPLGTNSDIDKIPFHPYHTYKDTLMLTTLLTLLFITTSFFPNIFNDPENFSKANPLITPQHIKPEWYFLFAYGILRSIPNKLGGTMALVMSIIILLTAPFTHTSHVRSMTFRPMAQVLFWTFIATFMLITWAATKPVEPPFTTIGLSTSILYFSFFIINPLLGWSENKIMNTHN</sequence>
<comment type="function">
    <text evidence="2">Component of the ubiquinol-cytochrome c reductase complex (complex III or cytochrome b-c1 complex) that is part of the mitochondrial respiratory chain. The b-c1 complex mediates electron transfer from ubiquinol to cytochrome c. Contributes to the generation of a proton gradient across the mitochondrial membrane that is then used for ATP synthesis.</text>
</comment>
<comment type="cofactor">
    <cofactor evidence="2">
        <name>heme b</name>
        <dbReference type="ChEBI" id="CHEBI:60344"/>
    </cofactor>
    <text evidence="2">Binds 2 heme b groups non-covalently.</text>
</comment>
<comment type="subunit">
    <text evidence="2">The cytochrome bc1 complex contains 3 respiratory subunits (MT-CYB, CYC1 and UQCRFS1), 2 core proteins (UQCRC1 and UQCRC2) and probably 6 low-molecular weight proteins.</text>
</comment>
<comment type="subcellular location">
    <subcellularLocation>
        <location evidence="2">Mitochondrion inner membrane</location>
        <topology evidence="2">Multi-pass membrane protein</topology>
    </subcellularLocation>
</comment>
<comment type="miscellaneous">
    <text evidence="1">Heme 1 (or BL or b562) is low-potential and absorbs at about 562 nm, and heme 2 (or BH or b566) is high-potential and absorbs at about 566 nm.</text>
</comment>
<comment type="similarity">
    <text evidence="3 4">Belongs to the cytochrome b family.</text>
</comment>
<comment type="caution">
    <text evidence="2">The full-length protein contains only eight transmembrane helices, not nine as predicted by bioinformatics tools.</text>
</comment>
<feature type="chain" id="PRO_0000061036" description="Cytochrome b">
    <location>
        <begin position="1"/>
        <end position="372"/>
    </location>
</feature>
<feature type="transmembrane region" description="Helical" evidence="2">
    <location>
        <begin position="25"/>
        <end position="45"/>
    </location>
</feature>
<feature type="transmembrane region" description="Helical" evidence="2">
    <location>
        <begin position="69"/>
        <end position="90"/>
    </location>
</feature>
<feature type="transmembrane region" description="Helical" evidence="2">
    <location>
        <begin position="105"/>
        <end position="125"/>
    </location>
</feature>
<feature type="transmembrane region" description="Helical" evidence="2">
    <location>
        <begin position="170"/>
        <end position="190"/>
    </location>
</feature>
<feature type="transmembrane region" description="Helical" evidence="2">
    <location>
        <begin position="218"/>
        <end position="238"/>
    </location>
</feature>
<feature type="transmembrane region" description="Helical" evidence="2">
    <location>
        <begin position="280"/>
        <end position="300"/>
    </location>
</feature>
<feature type="transmembrane region" description="Helical" evidence="2">
    <location>
        <begin position="312"/>
        <end position="332"/>
    </location>
</feature>
<feature type="transmembrane region" description="Helical" evidence="2">
    <location>
        <begin position="339"/>
        <end position="358"/>
    </location>
</feature>
<feature type="binding site" description="axial binding residue" evidence="2">
    <location>
        <position position="75"/>
    </location>
    <ligand>
        <name>heme b</name>
        <dbReference type="ChEBI" id="CHEBI:60344"/>
        <label>b562</label>
    </ligand>
    <ligandPart>
        <name>Fe</name>
        <dbReference type="ChEBI" id="CHEBI:18248"/>
    </ligandPart>
</feature>
<feature type="binding site" description="axial binding residue" evidence="2">
    <location>
        <position position="89"/>
    </location>
    <ligand>
        <name>heme b</name>
        <dbReference type="ChEBI" id="CHEBI:60344"/>
        <label>b566</label>
    </ligand>
    <ligandPart>
        <name>Fe</name>
        <dbReference type="ChEBI" id="CHEBI:18248"/>
    </ligandPart>
</feature>
<feature type="binding site" description="axial binding residue" evidence="2">
    <location>
        <position position="174"/>
    </location>
    <ligand>
        <name>heme b</name>
        <dbReference type="ChEBI" id="CHEBI:60344"/>
        <label>b562</label>
    </ligand>
    <ligandPart>
        <name>Fe</name>
        <dbReference type="ChEBI" id="CHEBI:18248"/>
    </ligandPart>
</feature>
<feature type="binding site" description="axial binding residue" evidence="2">
    <location>
        <position position="188"/>
    </location>
    <ligand>
        <name>heme b</name>
        <dbReference type="ChEBI" id="CHEBI:60344"/>
        <label>b566</label>
    </ligand>
    <ligandPart>
        <name>Fe</name>
        <dbReference type="ChEBI" id="CHEBI:18248"/>
    </ligandPart>
</feature>
<feature type="binding site" evidence="2">
    <location>
        <position position="193"/>
    </location>
    <ligand>
        <name>a ubiquinone</name>
        <dbReference type="ChEBI" id="CHEBI:16389"/>
    </ligand>
</feature>
<evidence type="ECO:0000250" key="1"/>
<evidence type="ECO:0000250" key="2">
    <source>
        <dbReference type="UniProtKB" id="P00157"/>
    </source>
</evidence>
<evidence type="ECO:0000255" key="3">
    <source>
        <dbReference type="PROSITE-ProRule" id="PRU00967"/>
    </source>
</evidence>
<evidence type="ECO:0000255" key="4">
    <source>
        <dbReference type="PROSITE-ProRule" id="PRU00968"/>
    </source>
</evidence>
<dbReference type="EMBL" id="AF217840">
    <property type="protein sequence ID" value="AAF37259.1"/>
    <property type="molecule type" value="Genomic_DNA"/>
</dbReference>
<dbReference type="SMR" id="Q9MLI8"/>
<dbReference type="GO" id="GO:0005743">
    <property type="term" value="C:mitochondrial inner membrane"/>
    <property type="evidence" value="ECO:0007669"/>
    <property type="project" value="UniProtKB-SubCell"/>
</dbReference>
<dbReference type="GO" id="GO:0045275">
    <property type="term" value="C:respiratory chain complex III"/>
    <property type="evidence" value="ECO:0007669"/>
    <property type="project" value="InterPro"/>
</dbReference>
<dbReference type="GO" id="GO:0046872">
    <property type="term" value="F:metal ion binding"/>
    <property type="evidence" value="ECO:0007669"/>
    <property type="project" value="UniProtKB-KW"/>
</dbReference>
<dbReference type="GO" id="GO:0008121">
    <property type="term" value="F:ubiquinol-cytochrome-c reductase activity"/>
    <property type="evidence" value="ECO:0007669"/>
    <property type="project" value="InterPro"/>
</dbReference>
<dbReference type="GO" id="GO:0006122">
    <property type="term" value="P:mitochondrial electron transport, ubiquinol to cytochrome c"/>
    <property type="evidence" value="ECO:0007669"/>
    <property type="project" value="TreeGrafter"/>
</dbReference>
<dbReference type="CDD" id="cd00290">
    <property type="entry name" value="cytochrome_b_C"/>
    <property type="match status" value="1"/>
</dbReference>
<dbReference type="CDD" id="cd00284">
    <property type="entry name" value="Cytochrome_b_N"/>
    <property type="match status" value="1"/>
</dbReference>
<dbReference type="Gene3D" id="1.20.810.10">
    <property type="entry name" value="Cytochrome Bc1 Complex, Chain C"/>
    <property type="match status" value="1"/>
</dbReference>
<dbReference type="InterPro" id="IPR005798">
    <property type="entry name" value="Cyt_b/b6_C"/>
</dbReference>
<dbReference type="InterPro" id="IPR036150">
    <property type="entry name" value="Cyt_b/b6_C_sf"/>
</dbReference>
<dbReference type="InterPro" id="IPR005797">
    <property type="entry name" value="Cyt_b/b6_N"/>
</dbReference>
<dbReference type="InterPro" id="IPR027387">
    <property type="entry name" value="Cytb/b6-like_sf"/>
</dbReference>
<dbReference type="InterPro" id="IPR030689">
    <property type="entry name" value="Cytochrome_b"/>
</dbReference>
<dbReference type="InterPro" id="IPR048260">
    <property type="entry name" value="Cytochrome_b_C_euk/bac"/>
</dbReference>
<dbReference type="InterPro" id="IPR048259">
    <property type="entry name" value="Cytochrome_b_N_euk/bac"/>
</dbReference>
<dbReference type="InterPro" id="IPR016174">
    <property type="entry name" value="Di-haem_cyt_TM"/>
</dbReference>
<dbReference type="PANTHER" id="PTHR19271">
    <property type="entry name" value="CYTOCHROME B"/>
    <property type="match status" value="1"/>
</dbReference>
<dbReference type="PANTHER" id="PTHR19271:SF16">
    <property type="entry name" value="CYTOCHROME B"/>
    <property type="match status" value="1"/>
</dbReference>
<dbReference type="Pfam" id="PF00032">
    <property type="entry name" value="Cytochrom_B_C"/>
    <property type="match status" value="1"/>
</dbReference>
<dbReference type="Pfam" id="PF00033">
    <property type="entry name" value="Cytochrome_B"/>
    <property type="match status" value="1"/>
</dbReference>
<dbReference type="PIRSF" id="PIRSF038885">
    <property type="entry name" value="COB"/>
    <property type="match status" value="1"/>
</dbReference>
<dbReference type="SUPFAM" id="SSF81648">
    <property type="entry name" value="a domain/subunit of cytochrome bc1 complex (Ubiquinol-cytochrome c reductase)"/>
    <property type="match status" value="1"/>
</dbReference>
<dbReference type="SUPFAM" id="SSF81342">
    <property type="entry name" value="Transmembrane di-heme cytochromes"/>
    <property type="match status" value="1"/>
</dbReference>
<dbReference type="PROSITE" id="PS51003">
    <property type="entry name" value="CYTB_CTER"/>
    <property type="match status" value="1"/>
</dbReference>
<dbReference type="PROSITE" id="PS51002">
    <property type="entry name" value="CYTB_NTER"/>
    <property type="match status" value="1"/>
</dbReference>
<keyword id="KW-0249">Electron transport</keyword>
<keyword id="KW-0349">Heme</keyword>
<keyword id="KW-0408">Iron</keyword>
<keyword id="KW-0472">Membrane</keyword>
<keyword id="KW-0479">Metal-binding</keyword>
<keyword id="KW-0496">Mitochondrion</keyword>
<keyword id="KW-0999">Mitochondrion inner membrane</keyword>
<keyword id="KW-0679">Respiratory chain</keyword>
<keyword id="KW-0812">Transmembrane</keyword>
<keyword id="KW-1133">Transmembrane helix</keyword>
<keyword id="KW-0813">Transport</keyword>
<keyword id="KW-0830">Ubiquinone</keyword>
<reference key="1">
    <citation type="journal article" date="2000" name="Mol. Phylogenet. Evol.">
        <title>Phylogenetic relationships of elapid snakes based on cytochrome b mtDNA sequences.</title>
        <authorList>
            <person name="Slowinski J.B."/>
            <person name="Keogh J.S."/>
        </authorList>
    </citation>
    <scope>NUCLEOTIDE SEQUENCE [GENOMIC DNA]</scope>
</reference>
<protein>
    <recommendedName>
        <fullName>Cytochrome b</fullName>
    </recommendedName>
    <alternativeName>
        <fullName>Complex III subunit 3</fullName>
    </alternativeName>
    <alternativeName>
        <fullName>Complex III subunit III</fullName>
    </alternativeName>
    <alternativeName>
        <fullName>Cytochrome b-c1 complex subunit 3</fullName>
    </alternativeName>
    <alternativeName>
        <fullName>Ubiquinol-cytochrome-c reductase complex cytochrome b subunit</fullName>
    </alternativeName>
</protein>